<sequence>MSSNLIKSFGLIAIGAISGVTFTHFYYKGYQGSDVPDLTPRYTKFDSAGRALESIYDFNATKFFQYGIPGPVADQRVNHGYMSVFDRRTRNPFYTAETITQESLNQRKGNRRYSEFVPDDNIPEMFQAKLGDYRGSGYDRGHQVPAADCKFSQEAMNETFYLSNMCPQVGDGFNRNYWAYFEDWCRRLTSKYGSVTIMTGPLYLPKKNERGQWEVQYRVIGNPPNVAVPTHFFKVIIAEKSGEPTSSPSVAAFVLPNKPIADNFPLKNFAVPVEVVERASGLEILSNVPKGNRKQLCSEVVCQLNVKEFVESVKQKQKNQGK</sequence>
<reference key="1">
    <citation type="journal article" date="2001" name="Biochim. Biophys. Acta">
        <title>Isolation and characterization of the Schizosaccharomyces pombe cDNA encoding the mitochondrial endonuclease.</title>
        <authorList>
            <person name="Ikeda S."/>
            <person name="Kawasaki N."/>
        </authorList>
    </citation>
    <scope>NUCLEOTIDE SEQUENCE [MRNA]</scope>
    <scope>FUNCTION</scope>
    <scope>COFACTOR</scope>
    <scope>SUBCELLULAR LOCATION</scope>
    <source>
        <strain>ATCC 87289</strain>
    </source>
</reference>
<reference key="2">
    <citation type="journal article" date="2002" name="Nature">
        <title>The genome sequence of Schizosaccharomyces pombe.</title>
        <authorList>
            <person name="Wood V."/>
            <person name="Gwilliam R."/>
            <person name="Rajandream M.A."/>
            <person name="Lyne M.H."/>
            <person name="Lyne R."/>
            <person name="Stewart A."/>
            <person name="Sgouros J.G."/>
            <person name="Peat N."/>
            <person name="Hayles J."/>
            <person name="Baker S.G."/>
            <person name="Basham D."/>
            <person name="Bowman S."/>
            <person name="Brooks K."/>
            <person name="Brown D."/>
            <person name="Brown S."/>
            <person name="Chillingworth T."/>
            <person name="Churcher C.M."/>
            <person name="Collins M."/>
            <person name="Connor R."/>
            <person name="Cronin A."/>
            <person name="Davis P."/>
            <person name="Feltwell T."/>
            <person name="Fraser A."/>
            <person name="Gentles S."/>
            <person name="Goble A."/>
            <person name="Hamlin N."/>
            <person name="Harris D.E."/>
            <person name="Hidalgo J."/>
            <person name="Hodgson G."/>
            <person name="Holroyd S."/>
            <person name="Hornsby T."/>
            <person name="Howarth S."/>
            <person name="Huckle E.J."/>
            <person name="Hunt S."/>
            <person name="Jagels K."/>
            <person name="James K.D."/>
            <person name="Jones L."/>
            <person name="Jones M."/>
            <person name="Leather S."/>
            <person name="McDonald S."/>
            <person name="McLean J."/>
            <person name="Mooney P."/>
            <person name="Moule S."/>
            <person name="Mungall K.L."/>
            <person name="Murphy L.D."/>
            <person name="Niblett D."/>
            <person name="Odell C."/>
            <person name="Oliver K."/>
            <person name="O'Neil S."/>
            <person name="Pearson D."/>
            <person name="Quail M.A."/>
            <person name="Rabbinowitsch E."/>
            <person name="Rutherford K.M."/>
            <person name="Rutter S."/>
            <person name="Saunders D."/>
            <person name="Seeger K."/>
            <person name="Sharp S."/>
            <person name="Skelton J."/>
            <person name="Simmonds M.N."/>
            <person name="Squares R."/>
            <person name="Squares S."/>
            <person name="Stevens K."/>
            <person name="Taylor K."/>
            <person name="Taylor R.G."/>
            <person name="Tivey A."/>
            <person name="Walsh S.V."/>
            <person name="Warren T."/>
            <person name="Whitehead S."/>
            <person name="Woodward J.R."/>
            <person name="Volckaert G."/>
            <person name="Aert R."/>
            <person name="Robben J."/>
            <person name="Grymonprez B."/>
            <person name="Weltjens I."/>
            <person name="Vanstreels E."/>
            <person name="Rieger M."/>
            <person name="Schaefer M."/>
            <person name="Mueller-Auer S."/>
            <person name="Gabel C."/>
            <person name="Fuchs M."/>
            <person name="Duesterhoeft A."/>
            <person name="Fritzc C."/>
            <person name="Holzer E."/>
            <person name="Moestl D."/>
            <person name="Hilbert H."/>
            <person name="Borzym K."/>
            <person name="Langer I."/>
            <person name="Beck A."/>
            <person name="Lehrach H."/>
            <person name="Reinhardt R."/>
            <person name="Pohl T.M."/>
            <person name="Eger P."/>
            <person name="Zimmermann W."/>
            <person name="Wedler H."/>
            <person name="Wambutt R."/>
            <person name="Purnelle B."/>
            <person name="Goffeau A."/>
            <person name="Cadieu E."/>
            <person name="Dreano S."/>
            <person name="Gloux S."/>
            <person name="Lelaure V."/>
            <person name="Mottier S."/>
            <person name="Galibert F."/>
            <person name="Aves S.J."/>
            <person name="Xiang Z."/>
            <person name="Hunt C."/>
            <person name="Moore K."/>
            <person name="Hurst S.M."/>
            <person name="Lucas M."/>
            <person name="Rochet M."/>
            <person name="Gaillardin C."/>
            <person name="Tallada V.A."/>
            <person name="Garzon A."/>
            <person name="Thode G."/>
            <person name="Daga R.R."/>
            <person name="Cruzado L."/>
            <person name="Jimenez J."/>
            <person name="Sanchez M."/>
            <person name="del Rey F."/>
            <person name="Benito J."/>
            <person name="Dominguez A."/>
            <person name="Revuelta J.L."/>
            <person name="Moreno S."/>
            <person name="Armstrong J."/>
            <person name="Forsburg S.L."/>
            <person name="Cerutti L."/>
            <person name="Lowe T."/>
            <person name="McCombie W.R."/>
            <person name="Paulsen I."/>
            <person name="Potashkin J."/>
            <person name="Shpakovski G.V."/>
            <person name="Ussery D."/>
            <person name="Barrell B.G."/>
            <person name="Nurse P."/>
        </authorList>
    </citation>
    <scope>NUCLEOTIDE SEQUENCE [LARGE SCALE GENOMIC DNA]</scope>
    <source>
        <strain>972 / ATCC 24843</strain>
    </source>
</reference>
<evidence type="ECO:0000250" key="1"/>
<evidence type="ECO:0000255" key="2">
    <source>
        <dbReference type="PROSITE-ProRule" id="PRU10047"/>
    </source>
</evidence>
<evidence type="ECO:0000269" key="3">
    <source>
    </source>
</evidence>
<evidence type="ECO:0000305" key="4"/>
<organism>
    <name type="scientific">Schizosaccharomyces pombe (strain 972 / ATCC 24843)</name>
    <name type="common">Fission yeast</name>
    <dbReference type="NCBI Taxonomy" id="284812"/>
    <lineage>
        <taxon>Eukaryota</taxon>
        <taxon>Fungi</taxon>
        <taxon>Dikarya</taxon>
        <taxon>Ascomycota</taxon>
        <taxon>Taphrinomycotina</taxon>
        <taxon>Schizosaccharomycetes</taxon>
        <taxon>Schizosaccharomycetales</taxon>
        <taxon>Schizosaccharomycetaceae</taxon>
        <taxon>Schizosaccharomyces</taxon>
    </lineage>
</organism>
<name>PNU1_SCHPO</name>
<comment type="function">
    <text evidence="3">This enzyme has both RNase and DNase activity. It degrades single-stranded DNA and RNA.</text>
</comment>
<comment type="cofactor">
    <cofactor evidence="3">
        <name>Mn(2+)</name>
        <dbReference type="ChEBI" id="CHEBI:29035"/>
    </cofactor>
    <cofactor evidence="3">
        <name>Mg(2+)</name>
        <dbReference type="ChEBI" id="CHEBI:18420"/>
    </cofactor>
</comment>
<comment type="subunit">
    <text evidence="1">Homodimer.</text>
</comment>
<comment type="subcellular location">
    <subcellularLocation>
        <location evidence="3">Mitochondrion inner membrane</location>
    </subcellularLocation>
</comment>
<comment type="miscellaneous">
    <text evidence="1">The active site contains 1 hydrated divalent metal cation that has only 1 direct interaction with the protein; all other interactions are via water molecules.</text>
</comment>
<comment type="similarity">
    <text evidence="4">Belongs to the DNA/RNA non-specific endonuclease family.</text>
</comment>
<accession>Q10480</accession>
<accession>Q9HFA0</accession>
<feature type="transit peptide" description="Mitochondrion">
    <location>
        <begin position="1"/>
        <end status="unknown"/>
    </location>
</feature>
<feature type="chain" id="PRO_0000019921" description="Nuclease 1, mitochondrial">
    <location>
        <begin status="unknown"/>
        <end position="322"/>
    </location>
</feature>
<feature type="active site" description="Proton acceptor" evidence="2">
    <location>
        <position position="142"/>
    </location>
</feature>
<feature type="binding site" evidence="1">
    <location>
        <position position="174"/>
    </location>
    <ligand>
        <name>Mg(2+)</name>
        <dbReference type="ChEBI" id="CHEBI:18420"/>
        <note>catalytic</note>
    </ligand>
</feature>
<feature type="sequence conflict" description="In Ref. 2; CAA97354." evidence="4" ref="2">
    <original>GK</original>
    <variation>VFLVFPVIVLYYENI</variation>
    <location>
        <begin position="321"/>
        <end position="322"/>
    </location>
</feature>
<proteinExistence type="evidence at transcript level"/>
<dbReference type="EC" id="3.1.30.-"/>
<dbReference type="EMBL" id="AB050780">
    <property type="protein sequence ID" value="BAB20882.1"/>
    <property type="molecule type" value="mRNA"/>
</dbReference>
<dbReference type="EMBL" id="CU329670">
    <property type="protein sequence ID" value="CAA97354.2"/>
    <property type="molecule type" value="Genomic_DNA"/>
</dbReference>
<dbReference type="PIR" id="T11588">
    <property type="entry name" value="T11588"/>
</dbReference>
<dbReference type="RefSeq" id="NP_594598.2">
    <property type="nucleotide sequence ID" value="NM_001020026.3"/>
</dbReference>
<dbReference type="SMR" id="Q10480"/>
<dbReference type="BioGRID" id="278759">
    <property type="interactions" value="14"/>
</dbReference>
<dbReference type="FunCoup" id="Q10480">
    <property type="interactions" value="228"/>
</dbReference>
<dbReference type="STRING" id="284812.Q10480"/>
<dbReference type="iPTMnet" id="Q10480"/>
<dbReference type="PaxDb" id="4896-SPAC17C9.08.1"/>
<dbReference type="EnsemblFungi" id="SPAC17C9.08.1">
    <property type="protein sequence ID" value="SPAC17C9.08.1:pep"/>
    <property type="gene ID" value="SPAC17C9.08"/>
</dbReference>
<dbReference type="GeneID" id="2542291"/>
<dbReference type="KEGG" id="spo:2542291"/>
<dbReference type="PomBase" id="SPAC17C9.08">
    <property type="gene designation" value="pnu1"/>
</dbReference>
<dbReference type="VEuPathDB" id="FungiDB:SPAC17C9.08"/>
<dbReference type="eggNOG" id="KOG3721">
    <property type="taxonomic scope" value="Eukaryota"/>
</dbReference>
<dbReference type="HOGENOM" id="CLU_055174_0_2_1"/>
<dbReference type="InParanoid" id="Q10480"/>
<dbReference type="OMA" id="YVMPNQV"/>
<dbReference type="PhylomeDB" id="Q10480"/>
<dbReference type="PRO" id="PR:Q10480"/>
<dbReference type="Proteomes" id="UP000002485">
    <property type="component" value="Chromosome I"/>
</dbReference>
<dbReference type="GO" id="GO:0005743">
    <property type="term" value="C:mitochondrial inner membrane"/>
    <property type="evidence" value="ECO:0000318"/>
    <property type="project" value="GO_Central"/>
</dbReference>
<dbReference type="GO" id="GO:0005739">
    <property type="term" value="C:mitochondrion"/>
    <property type="evidence" value="ECO:0000314"/>
    <property type="project" value="PomBase"/>
</dbReference>
<dbReference type="GO" id="GO:0005634">
    <property type="term" value="C:nucleus"/>
    <property type="evidence" value="ECO:0000318"/>
    <property type="project" value="GO_Central"/>
</dbReference>
<dbReference type="GO" id="GO:0005736">
    <property type="term" value="C:RNA polymerase I complex"/>
    <property type="evidence" value="ECO:0000314"/>
    <property type="project" value="PomBase"/>
</dbReference>
<dbReference type="GO" id="GO:0004520">
    <property type="term" value="F:DNA endonuclease activity"/>
    <property type="evidence" value="ECO:0000315"/>
    <property type="project" value="PomBase"/>
</dbReference>
<dbReference type="GO" id="GO:0004536">
    <property type="term" value="F:DNA nuclease activity"/>
    <property type="evidence" value="ECO:0000269"/>
    <property type="project" value="PomBase"/>
</dbReference>
<dbReference type="GO" id="GO:0046872">
    <property type="term" value="F:metal ion binding"/>
    <property type="evidence" value="ECO:0007669"/>
    <property type="project" value="UniProtKB-KW"/>
</dbReference>
<dbReference type="GO" id="GO:0003676">
    <property type="term" value="F:nucleic acid binding"/>
    <property type="evidence" value="ECO:0007669"/>
    <property type="project" value="InterPro"/>
</dbReference>
<dbReference type="GO" id="GO:0004521">
    <property type="term" value="F:RNA endonuclease activity"/>
    <property type="evidence" value="ECO:0000314"/>
    <property type="project" value="PomBase"/>
</dbReference>
<dbReference type="GO" id="GO:0004540">
    <property type="term" value="F:RNA nuclease activity"/>
    <property type="evidence" value="ECO:0000269"/>
    <property type="project" value="PomBase"/>
</dbReference>
<dbReference type="GO" id="GO:0000014">
    <property type="term" value="F:single-stranded DNA endodeoxyribonuclease activity"/>
    <property type="evidence" value="ECO:0000314"/>
    <property type="project" value="PomBase"/>
</dbReference>
<dbReference type="GO" id="GO:0032043">
    <property type="term" value="P:mitochondrial DNA catabolic process"/>
    <property type="evidence" value="ECO:0000269"/>
    <property type="project" value="PomBase"/>
</dbReference>
<dbReference type="GO" id="GO:0000957">
    <property type="term" value="P:mitochondrial RNA catabolic process"/>
    <property type="evidence" value="ECO:0000269"/>
    <property type="project" value="PomBase"/>
</dbReference>
<dbReference type="GO" id="GO:0006362">
    <property type="term" value="P:transcription elongation by RNA polymerase I"/>
    <property type="evidence" value="ECO:0000269"/>
    <property type="project" value="PomBase"/>
</dbReference>
<dbReference type="CDD" id="cd00091">
    <property type="entry name" value="NUC"/>
    <property type="match status" value="1"/>
</dbReference>
<dbReference type="FunFam" id="3.40.570.10:FF:000004">
    <property type="entry name" value="Nuclease 1, mitochondrial"/>
    <property type="match status" value="1"/>
</dbReference>
<dbReference type="Gene3D" id="3.40.570.10">
    <property type="entry name" value="Extracellular Endonuclease, subunit A"/>
    <property type="match status" value="1"/>
</dbReference>
<dbReference type="InterPro" id="IPR018524">
    <property type="entry name" value="DNA/RNA_endonuclease_AS"/>
</dbReference>
<dbReference type="InterPro" id="IPR044929">
    <property type="entry name" value="DNA/RNA_non-sp_Endonuclease_sf"/>
</dbReference>
<dbReference type="InterPro" id="IPR001604">
    <property type="entry name" value="Endo_G_ENPP1-like_dom"/>
</dbReference>
<dbReference type="InterPro" id="IPR020821">
    <property type="entry name" value="ENPP1-3/EXOG-like_nuc-like"/>
</dbReference>
<dbReference type="InterPro" id="IPR044925">
    <property type="entry name" value="His-Me_finger_sf"/>
</dbReference>
<dbReference type="InterPro" id="IPR040255">
    <property type="entry name" value="Non-specific_endonuclease"/>
</dbReference>
<dbReference type="PANTHER" id="PTHR13966:SF5">
    <property type="entry name" value="ENDONUCLEASE G, MITOCHONDRIAL"/>
    <property type="match status" value="1"/>
</dbReference>
<dbReference type="PANTHER" id="PTHR13966">
    <property type="entry name" value="ENDONUCLEASE RELATED"/>
    <property type="match status" value="1"/>
</dbReference>
<dbReference type="Pfam" id="PF01223">
    <property type="entry name" value="Endonuclease_NS"/>
    <property type="match status" value="1"/>
</dbReference>
<dbReference type="SMART" id="SM00892">
    <property type="entry name" value="Endonuclease_NS"/>
    <property type="match status" value="1"/>
</dbReference>
<dbReference type="SMART" id="SM00477">
    <property type="entry name" value="NUC"/>
    <property type="match status" value="1"/>
</dbReference>
<dbReference type="SUPFAM" id="SSF54060">
    <property type="entry name" value="His-Me finger endonucleases"/>
    <property type="match status" value="1"/>
</dbReference>
<dbReference type="PROSITE" id="PS01070">
    <property type="entry name" value="NUCLEASE_NON_SPEC"/>
    <property type="match status" value="1"/>
</dbReference>
<keyword id="KW-0255">Endonuclease</keyword>
<keyword id="KW-0378">Hydrolase</keyword>
<keyword id="KW-0460">Magnesium</keyword>
<keyword id="KW-0464">Manganese</keyword>
<keyword id="KW-0472">Membrane</keyword>
<keyword id="KW-0479">Metal-binding</keyword>
<keyword id="KW-0496">Mitochondrion</keyword>
<keyword id="KW-0999">Mitochondrion inner membrane</keyword>
<keyword id="KW-0540">Nuclease</keyword>
<keyword id="KW-1185">Reference proteome</keyword>
<keyword id="KW-0809">Transit peptide</keyword>
<gene>
    <name type="primary">pnu1</name>
    <name type="synonym">nuc1</name>
    <name type="ORF">SPAC17C9.08</name>
</gene>
<protein>
    <recommendedName>
        <fullName>Nuclease 1, mitochondrial</fullName>
        <ecNumber>3.1.30.-</ecNumber>
    </recommendedName>
    <alternativeName>
        <fullName>SpNUC1</fullName>
    </alternativeName>
</protein>